<protein>
    <recommendedName>
        <fullName evidence="1">Protein-glutamine gamma-glutamyltransferase</fullName>
        <ecNumber evidence="1">2.3.2.13</ecNumber>
    </recommendedName>
    <alternativeName>
        <fullName evidence="1">Transglutaminase</fullName>
        <shortName evidence="1">TGase</shortName>
    </alternativeName>
</protein>
<name>TGL_BACHK</name>
<keyword id="KW-0012">Acyltransferase</keyword>
<keyword id="KW-0749">Sporulation</keyword>
<keyword id="KW-0808">Transferase</keyword>
<proteinExistence type="inferred from homology"/>
<accession>Q6HEJ9</accession>
<organism>
    <name type="scientific">Bacillus thuringiensis subsp. konkukian (strain 97-27)</name>
    <dbReference type="NCBI Taxonomy" id="281309"/>
    <lineage>
        <taxon>Bacteria</taxon>
        <taxon>Bacillati</taxon>
        <taxon>Bacillota</taxon>
        <taxon>Bacilli</taxon>
        <taxon>Bacillales</taxon>
        <taxon>Bacillaceae</taxon>
        <taxon>Bacillus</taxon>
        <taxon>Bacillus cereus group</taxon>
    </lineage>
</organism>
<comment type="function">
    <text evidence="1">Probably plays a role in the assembly of the spore coat proteins by catalyzing epsilon-(gamma-glutamyl)lysine cross-links.</text>
</comment>
<comment type="catalytic activity">
    <reaction evidence="1">
        <text>L-glutaminyl-[protein] + L-lysyl-[protein] = [protein]-L-lysyl-N(6)-5-L-glutamyl-[protein] + NH4(+)</text>
        <dbReference type="Rhea" id="RHEA:54816"/>
        <dbReference type="Rhea" id="RHEA-COMP:9752"/>
        <dbReference type="Rhea" id="RHEA-COMP:10207"/>
        <dbReference type="Rhea" id="RHEA-COMP:14005"/>
        <dbReference type="ChEBI" id="CHEBI:28938"/>
        <dbReference type="ChEBI" id="CHEBI:29969"/>
        <dbReference type="ChEBI" id="CHEBI:30011"/>
        <dbReference type="ChEBI" id="CHEBI:138370"/>
        <dbReference type="EC" id="2.3.2.13"/>
    </reaction>
</comment>
<comment type="similarity">
    <text evidence="1">Belongs to the bacillus TGase family.</text>
</comment>
<evidence type="ECO:0000255" key="1">
    <source>
        <dbReference type="HAMAP-Rule" id="MF_00727"/>
    </source>
</evidence>
<reference key="1">
    <citation type="journal article" date="2006" name="J. Bacteriol.">
        <title>Pathogenomic sequence analysis of Bacillus cereus and Bacillus thuringiensis isolates closely related to Bacillus anthracis.</title>
        <authorList>
            <person name="Han C.S."/>
            <person name="Xie G."/>
            <person name="Challacombe J.F."/>
            <person name="Altherr M.R."/>
            <person name="Bhotika S.S."/>
            <person name="Bruce D."/>
            <person name="Campbell C.S."/>
            <person name="Campbell M.L."/>
            <person name="Chen J."/>
            <person name="Chertkov O."/>
            <person name="Cleland C."/>
            <person name="Dimitrijevic M."/>
            <person name="Doggett N.A."/>
            <person name="Fawcett J.J."/>
            <person name="Glavina T."/>
            <person name="Goodwin L.A."/>
            <person name="Hill K.K."/>
            <person name="Hitchcock P."/>
            <person name="Jackson P.J."/>
            <person name="Keim P."/>
            <person name="Kewalramani A.R."/>
            <person name="Longmire J."/>
            <person name="Lucas S."/>
            <person name="Malfatti S."/>
            <person name="McMurry K."/>
            <person name="Meincke L.J."/>
            <person name="Misra M."/>
            <person name="Moseman B.L."/>
            <person name="Mundt M."/>
            <person name="Munk A.C."/>
            <person name="Okinaka R.T."/>
            <person name="Parson-Quintana B."/>
            <person name="Reilly L.P."/>
            <person name="Richardson P."/>
            <person name="Robinson D.L."/>
            <person name="Rubin E."/>
            <person name="Saunders E."/>
            <person name="Tapia R."/>
            <person name="Tesmer J.G."/>
            <person name="Thayer N."/>
            <person name="Thompson L.S."/>
            <person name="Tice H."/>
            <person name="Ticknor L.O."/>
            <person name="Wills P.L."/>
            <person name="Brettin T.S."/>
            <person name="Gilna P."/>
        </authorList>
    </citation>
    <scope>NUCLEOTIDE SEQUENCE [LARGE SCALE GENOMIC DNA]</scope>
    <source>
        <strain>97-27</strain>
    </source>
</reference>
<dbReference type="EC" id="2.3.2.13" evidence="1"/>
<dbReference type="EMBL" id="AE017355">
    <property type="protein sequence ID" value="AAT63084.1"/>
    <property type="molecule type" value="Genomic_DNA"/>
</dbReference>
<dbReference type="RefSeq" id="WP_000635329.1">
    <property type="nucleotide sequence ID" value="NC_005957.1"/>
</dbReference>
<dbReference type="RefSeq" id="YP_038027.1">
    <property type="nucleotide sequence ID" value="NC_005957.1"/>
</dbReference>
<dbReference type="SMR" id="Q6HEJ9"/>
<dbReference type="KEGG" id="btk:BT9727_3708"/>
<dbReference type="PATRIC" id="fig|281309.8.peg.3946"/>
<dbReference type="HOGENOM" id="CLU_088922_0_0_9"/>
<dbReference type="Proteomes" id="UP000001301">
    <property type="component" value="Chromosome"/>
</dbReference>
<dbReference type="GO" id="GO:0003810">
    <property type="term" value="F:protein-glutamine gamma-glutamyltransferase activity"/>
    <property type="evidence" value="ECO:0007669"/>
    <property type="project" value="UniProtKB-UniRule"/>
</dbReference>
<dbReference type="GO" id="GO:0030435">
    <property type="term" value="P:sporulation resulting in formation of a cellular spore"/>
    <property type="evidence" value="ECO:0007669"/>
    <property type="project" value="UniProtKB-UniRule"/>
</dbReference>
<dbReference type="HAMAP" id="MF_00727">
    <property type="entry name" value="Tgl"/>
    <property type="match status" value="1"/>
</dbReference>
<dbReference type="InterPro" id="IPR020916">
    <property type="entry name" value="Gln_gamma-glutamylTfrase_bac"/>
</dbReference>
<dbReference type="NCBIfam" id="NF002869">
    <property type="entry name" value="PRK03187.1"/>
    <property type="match status" value="1"/>
</dbReference>
<dbReference type="Pfam" id="PF20085">
    <property type="entry name" value="TGL"/>
    <property type="match status" value="1"/>
</dbReference>
<feature type="chain" id="PRO_1000045889" description="Protein-glutamine gamma-glutamyltransferase">
    <location>
        <begin position="1"/>
        <end position="276"/>
    </location>
</feature>
<gene>
    <name evidence="1" type="primary">tgl</name>
    <name type="ordered locus">BT9727_3708</name>
</gene>
<sequence length="276" mass="31459">MIVIGRSIVHPYITNEYEPFAAEKQQILSIMAGNQEIYSFRTSDELSFDLNLRVNIITSALELFQSGFQFRTFQQSFCNPQYWKRTSLGGFELLPNIPPSIAIQDIFKNGKLYGTECATAMIIIFYKALLSLYEKETFNRLFANLLLYTWDYDQDLKLITKTGGDLVPGDLVYFKNPQVNPATIEWQGENTIYLGNFFFYGHGVGVKTKEEIIYALNERRVPYAFISAFLTDTITRIDSRLMSYHASPSTPQTSIGFIPIRDDAIVATVGNTTTVY</sequence>